<feature type="chain" id="PRO_0000274769" description="Phosphonates import ATP-binding protein PhnC">
    <location>
        <begin position="1"/>
        <end position="278"/>
    </location>
</feature>
<feature type="domain" description="ABC transporter" evidence="1">
    <location>
        <begin position="25"/>
        <end position="273"/>
    </location>
</feature>
<feature type="binding site" evidence="1">
    <location>
        <begin position="58"/>
        <end position="65"/>
    </location>
    <ligand>
        <name>ATP</name>
        <dbReference type="ChEBI" id="CHEBI:30616"/>
    </ligand>
</feature>
<accession>Q1C9L0</accession>
<reference key="1">
    <citation type="journal article" date="2006" name="J. Bacteriol.">
        <title>Complete genome sequence of Yersinia pestis strains Antiqua and Nepal516: evidence of gene reduction in an emerging pathogen.</title>
        <authorList>
            <person name="Chain P.S.G."/>
            <person name="Hu P."/>
            <person name="Malfatti S.A."/>
            <person name="Radnedge L."/>
            <person name="Larimer F."/>
            <person name="Vergez L.M."/>
            <person name="Worsham P."/>
            <person name="Chu M.C."/>
            <person name="Andersen G.L."/>
        </authorList>
    </citation>
    <scope>NUCLEOTIDE SEQUENCE [LARGE SCALE GENOMIC DNA]</scope>
    <source>
        <strain>Antiqua</strain>
    </source>
</reference>
<keyword id="KW-0067">ATP-binding</keyword>
<keyword id="KW-0997">Cell inner membrane</keyword>
<keyword id="KW-1003">Cell membrane</keyword>
<keyword id="KW-0472">Membrane</keyword>
<keyword id="KW-0547">Nucleotide-binding</keyword>
<keyword id="KW-0918">Phosphonate transport</keyword>
<keyword id="KW-1278">Translocase</keyword>
<keyword id="KW-0813">Transport</keyword>
<dbReference type="EC" id="7.3.2.2" evidence="1"/>
<dbReference type="EMBL" id="CP000308">
    <property type="protein sequence ID" value="ABG12862.1"/>
    <property type="status" value="ALT_INIT"/>
    <property type="molecule type" value="Genomic_DNA"/>
</dbReference>
<dbReference type="RefSeq" id="WP_002210787.1">
    <property type="nucleotide sequence ID" value="NZ_CP009906.1"/>
</dbReference>
<dbReference type="SMR" id="Q1C9L0"/>
<dbReference type="GeneID" id="57977322"/>
<dbReference type="KEGG" id="ypa:YPA_0894"/>
<dbReference type="Proteomes" id="UP000001971">
    <property type="component" value="Chromosome"/>
</dbReference>
<dbReference type="GO" id="GO:0005886">
    <property type="term" value="C:plasma membrane"/>
    <property type="evidence" value="ECO:0007669"/>
    <property type="project" value="UniProtKB-SubCell"/>
</dbReference>
<dbReference type="GO" id="GO:0015416">
    <property type="term" value="F:ABC-type phosphonate transporter activity"/>
    <property type="evidence" value="ECO:0007669"/>
    <property type="project" value="UniProtKB-EC"/>
</dbReference>
<dbReference type="GO" id="GO:0005524">
    <property type="term" value="F:ATP binding"/>
    <property type="evidence" value="ECO:0007669"/>
    <property type="project" value="UniProtKB-KW"/>
</dbReference>
<dbReference type="GO" id="GO:0016887">
    <property type="term" value="F:ATP hydrolysis activity"/>
    <property type="evidence" value="ECO:0007669"/>
    <property type="project" value="InterPro"/>
</dbReference>
<dbReference type="CDD" id="cd03256">
    <property type="entry name" value="ABC_PhnC_transporter"/>
    <property type="match status" value="1"/>
</dbReference>
<dbReference type="Gene3D" id="3.40.50.300">
    <property type="entry name" value="P-loop containing nucleotide triphosphate hydrolases"/>
    <property type="match status" value="1"/>
</dbReference>
<dbReference type="InterPro" id="IPR003593">
    <property type="entry name" value="AAA+_ATPase"/>
</dbReference>
<dbReference type="InterPro" id="IPR003439">
    <property type="entry name" value="ABC_transporter-like_ATP-bd"/>
</dbReference>
<dbReference type="InterPro" id="IPR017871">
    <property type="entry name" value="ABC_transporter-like_CS"/>
</dbReference>
<dbReference type="InterPro" id="IPR012693">
    <property type="entry name" value="ABC_transpr_PhnC"/>
</dbReference>
<dbReference type="InterPro" id="IPR050086">
    <property type="entry name" value="MetN_ABC_transporter-like"/>
</dbReference>
<dbReference type="InterPro" id="IPR027417">
    <property type="entry name" value="P-loop_NTPase"/>
</dbReference>
<dbReference type="NCBIfam" id="TIGR02315">
    <property type="entry name" value="ABC_phnC"/>
    <property type="match status" value="1"/>
</dbReference>
<dbReference type="PANTHER" id="PTHR43166">
    <property type="entry name" value="AMINO ACID IMPORT ATP-BINDING PROTEIN"/>
    <property type="match status" value="1"/>
</dbReference>
<dbReference type="PANTHER" id="PTHR43166:SF6">
    <property type="entry name" value="PHOSPHONATES IMPORT ATP-BINDING PROTEIN PHNC"/>
    <property type="match status" value="1"/>
</dbReference>
<dbReference type="Pfam" id="PF00005">
    <property type="entry name" value="ABC_tran"/>
    <property type="match status" value="1"/>
</dbReference>
<dbReference type="SMART" id="SM00382">
    <property type="entry name" value="AAA"/>
    <property type="match status" value="1"/>
</dbReference>
<dbReference type="SUPFAM" id="SSF52540">
    <property type="entry name" value="P-loop containing nucleoside triphosphate hydrolases"/>
    <property type="match status" value="1"/>
</dbReference>
<dbReference type="PROSITE" id="PS00211">
    <property type="entry name" value="ABC_TRANSPORTER_1"/>
    <property type="match status" value="1"/>
</dbReference>
<dbReference type="PROSITE" id="PS50893">
    <property type="entry name" value="ABC_TRANSPORTER_2"/>
    <property type="match status" value="1"/>
</dbReference>
<dbReference type="PROSITE" id="PS51249">
    <property type="entry name" value="PHNC"/>
    <property type="match status" value="1"/>
</dbReference>
<sequence length="278" mass="30989">MGQALRKLTAADYPVVVQEPRKKVLAVKGLVKAYKSQHRVLDNINFELHAGEFVAIIGRSGAGKSTLLHILNGTIPTSAGEIINYHENGDTQNIAALTTKQMRKWRAKCGMIFQDFCLVPRLDVITNVLLGRLSYTSTLKSFFKLFSEQDQARAIELLQWLNMLPHALQRAENLSGGQMQRVAICRAMMQNPKILLADEPVASLDPKNTTRIMNTLQKISENDIAVIVNLHSVDLVKDYCTRVIGIAHGRIIFDGPPSMLNDSIIQDIYSDESAELLH</sequence>
<gene>
    <name evidence="1" type="primary">phnC</name>
    <name type="ordered locus">YPA_0894</name>
</gene>
<comment type="function">
    <text evidence="1">Part of the ABC transporter complex PhnCDE involved in phosphonates import. Responsible for energy coupling to the transport system.</text>
</comment>
<comment type="catalytic activity">
    <reaction evidence="1">
        <text>phosphonate(out) + ATP + H2O = phosphonate(in) + ADP + phosphate + H(+)</text>
        <dbReference type="Rhea" id="RHEA:18065"/>
        <dbReference type="ChEBI" id="CHEBI:15377"/>
        <dbReference type="ChEBI" id="CHEBI:15378"/>
        <dbReference type="ChEBI" id="CHEBI:16215"/>
        <dbReference type="ChEBI" id="CHEBI:30616"/>
        <dbReference type="ChEBI" id="CHEBI:43474"/>
        <dbReference type="ChEBI" id="CHEBI:456216"/>
        <dbReference type="EC" id="7.3.2.2"/>
    </reaction>
</comment>
<comment type="subunit">
    <text evidence="1">The complex is composed of two ATP-binding proteins (PhnC), two transmembrane proteins (PhnE) and a solute-binding protein (PhnD).</text>
</comment>
<comment type="subcellular location">
    <subcellularLocation>
        <location evidence="1">Cell inner membrane</location>
        <topology evidence="1">Peripheral membrane protein</topology>
    </subcellularLocation>
</comment>
<comment type="similarity">
    <text evidence="1">Belongs to the ABC transporter superfamily. Phosphonates importer (TC 3.A.1.9.1) family.</text>
</comment>
<comment type="sequence caution" evidence="2">
    <conflict type="erroneous initiation">
        <sequence resource="EMBL-CDS" id="ABG12862"/>
    </conflict>
</comment>
<protein>
    <recommendedName>
        <fullName evidence="1">Phosphonates import ATP-binding protein PhnC</fullName>
        <ecNumber evidence="1">7.3.2.2</ecNumber>
    </recommendedName>
</protein>
<name>PHNC_YERPA</name>
<organism>
    <name type="scientific">Yersinia pestis bv. Antiqua (strain Antiqua)</name>
    <dbReference type="NCBI Taxonomy" id="360102"/>
    <lineage>
        <taxon>Bacteria</taxon>
        <taxon>Pseudomonadati</taxon>
        <taxon>Pseudomonadota</taxon>
        <taxon>Gammaproteobacteria</taxon>
        <taxon>Enterobacterales</taxon>
        <taxon>Yersiniaceae</taxon>
        <taxon>Yersinia</taxon>
    </lineage>
</organism>
<proteinExistence type="inferred from homology"/>
<evidence type="ECO:0000255" key="1">
    <source>
        <dbReference type="HAMAP-Rule" id="MF_01713"/>
    </source>
</evidence>
<evidence type="ECO:0000305" key="2"/>